<keyword id="KW-0687">Ribonucleoprotein</keyword>
<keyword id="KW-0689">Ribosomal protein</keyword>
<organism>
    <name type="scientific">Streptomyces griseus subsp. griseus (strain JCM 4626 / CBS 651.72 / NBRC 13350 / KCC S-0626 / ISP 5235)</name>
    <dbReference type="NCBI Taxonomy" id="455632"/>
    <lineage>
        <taxon>Bacteria</taxon>
        <taxon>Bacillati</taxon>
        <taxon>Actinomycetota</taxon>
        <taxon>Actinomycetes</taxon>
        <taxon>Kitasatosporales</taxon>
        <taxon>Streptomycetaceae</taxon>
        <taxon>Streptomyces</taxon>
    </lineage>
</organism>
<name>RL30_STRGG</name>
<feature type="chain" id="PRO_1000144722" description="Large ribosomal subunit protein uL30">
    <location>
        <begin position="1"/>
        <end position="60"/>
    </location>
</feature>
<dbReference type="EMBL" id="AP009493">
    <property type="protein sequence ID" value="BAG19645.1"/>
    <property type="molecule type" value="Genomic_DNA"/>
</dbReference>
<dbReference type="RefSeq" id="WP_003966943.1">
    <property type="nucleotide sequence ID" value="NC_010572.1"/>
</dbReference>
<dbReference type="SMR" id="B1W3Y9"/>
<dbReference type="GeneID" id="97760388"/>
<dbReference type="KEGG" id="sgr:SGR_2816"/>
<dbReference type="eggNOG" id="COG1841">
    <property type="taxonomic scope" value="Bacteria"/>
</dbReference>
<dbReference type="HOGENOM" id="CLU_131047_2_0_11"/>
<dbReference type="Proteomes" id="UP000001685">
    <property type="component" value="Chromosome"/>
</dbReference>
<dbReference type="GO" id="GO:0022625">
    <property type="term" value="C:cytosolic large ribosomal subunit"/>
    <property type="evidence" value="ECO:0007669"/>
    <property type="project" value="TreeGrafter"/>
</dbReference>
<dbReference type="GO" id="GO:0003735">
    <property type="term" value="F:structural constituent of ribosome"/>
    <property type="evidence" value="ECO:0007669"/>
    <property type="project" value="InterPro"/>
</dbReference>
<dbReference type="GO" id="GO:0006412">
    <property type="term" value="P:translation"/>
    <property type="evidence" value="ECO:0007669"/>
    <property type="project" value="UniProtKB-UniRule"/>
</dbReference>
<dbReference type="CDD" id="cd01658">
    <property type="entry name" value="Ribosomal_L30"/>
    <property type="match status" value="1"/>
</dbReference>
<dbReference type="FunFam" id="3.30.1390.20:FF:000001">
    <property type="entry name" value="50S ribosomal protein L30"/>
    <property type="match status" value="1"/>
</dbReference>
<dbReference type="Gene3D" id="3.30.1390.20">
    <property type="entry name" value="Ribosomal protein L30, ferredoxin-like fold domain"/>
    <property type="match status" value="1"/>
</dbReference>
<dbReference type="HAMAP" id="MF_01371_B">
    <property type="entry name" value="Ribosomal_uL30_B"/>
    <property type="match status" value="1"/>
</dbReference>
<dbReference type="InterPro" id="IPR036919">
    <property type="entry name" value="Ribo_uL30_ferredoxin-like_sf"/>
</dbReference>
<dbReference type="InterPro" id="IPR005996">
    <property type="entry name" value="Ribosomal_uL30_bac-type"/>
</dbReference>
<dbReference type="InterPro" id="IPR016082">
    <property type="entry name" value="Ribosomal_uL30_ferredoxin-like"/>
</dbReference>
<dbReference type="NCBIfam" id="TIGR01308">
    <property type="entry name" value="rpmD_bact"/>
    <property type="match status" value="1"/>
</dbReference>
<dbReference type="PANTHER" id="PTHR15892:SF2">
    <property type="entry name" value="LARGE RIBOSOMAL SUBUNIT PROTEIN UL30M"/>
    <property type="match status" value="1"/>
</dbReference>
<dbReference type="PANTHER" id="PTHR15892">
    <property type="entry name" value="MITOCHONDRIAL RIBOSOMAL PROTEIN L30"/>
    <property type="match status" value="1"/>
</dbReference>
<dbReference type="Pfam" id="PF00327">
    <property type="entry name" value="Ribosomal_L30"/>
    <property type="match status" value="1"/>
</dbReference>
<dbReference type="PIRSF" id="PIRSF002211">
    <property type="entry name" value="Ribosomal_L30_bac-type"/>
    <property type="match status" value="1"/>
</dbReference>
<dbReference type="SUPFAM" id="SSF55129">
    <property type="entry name" value="Ribosomal protein L30p/L7e"/>
    <property type="match status" value="1"/>
</dbReference>
<sequence>MARLKITQTKSYIGSKQNHRDTLRSLGLKRLNDSVVKEDRPEFRGMVHTVRHLVTVEEVD</sequence>
<gene>
    <name evidence="1" type="primary">rpmD</name>
    <name type="ordered locus">SGR_2816</name>
</gene>
<accession>B1W3Y9</accession>
<reference key="1">
    <citation type="journal article" date="2008" name="J. Bacteriol.">
        <title>Genome sequence of the streptomycin-producing microorganism Streptomyces griseus IFO 13350.</title>
        <authorList>
            <person name="Ohnishi Y."/>
            <person name="Ishikawa J."/>
            <person name="Hara H."/>
            <person name="Suzuki H."/>
            <person name="Ikenoya M."/>
            <person name="Ikeda H."/>
            <person name="Yamashita A."/>
            <person name="Hattori M."/>
            <person name="Horinouchi S."/>
        </authorList>
    </citation>
    <scope>NUCLEOTIDE SEQUENCE [LARGE SCALE GENOMIC DNA]</scope>
    <source>
        <strain>JCM 4626 / CBS 651.72 / NBRC 13350 / KCC S-0626 / ISP 5235</strain>
    </source>
</reference>
<evidence type="ECO:0000255" key="1">
    <source>
        <dbReference type="HAMAP-Rule" id="MF_01371"/>
    </source>
</evidence>
<evidence type="ECO:0000305" key="2"/>
<protein>
    <recommendedName>
        <fullName evidence="1">Large ribosomal subunit protein uL30</fullName>
    </recommendedName>
    <alternativeName>
        <fullName evidence="2">50S ribosomal protein L30</fullName>
    </alternativeName>
</protein>
<comment type="subunit">
    <text evidence="1">Part of the 50S ribosomal subunit.</text>
</comment>
<comment type="similarity">
    <text evidence="1">Belongs to the universal ribosomal protein uL30 family.</text>
</comment>
<proteinExistence type="inferred from homology"/>